<proteinExistence type="inferred from homology"/>
<comment type="similarity">
    <text evidence="1">Belongs to the UPF0262 family.</text>
</comment>
<organism>
    <name type="scientific">Chelativorans sp. (strain BNC1)</name>
    <dbReference type="NCBI Taxonomy" id="266779"/>
    <lineage>
        <taxon>Bacteria</taxon>
        <taxon>Pseudomonadati</taxon>
        <taxon>Pseudomonadota</taxon>
        <taxon>Alphaproteobacteria</taxon>
        <taxon>Hyphomicrobiales</taxon>
        <taxon>Phyllobacteriaceae</taxon>
        <taxon>Chelativorans</taxon>
    </lineage>
</organism>
<dbReference type="EMBL" id="CP000390">
    <property type="protein sequence ID" value="ABG61594.1"/>
    <property type="molecule type" value="Genomic_DNA"/>
</dbReference>
<dbReference type="STRING" id="266779.Meso_0189"/>
<dbReference type="KEGG" id="mes:Meso_0189"/>
<dbReference type="eggNOG" id="COG5328">
    <property type="taxonomic scope" value="Bacteria"/>
</dbReference>
<dbReference type="HOGENOM" id="CLU_112904_0_0_5"/>
<dbReference type="OrthoDB" id="9798434at2"/>
<dbReference type="HAMAP" id="MF_00678">
    <property type="entry name" value="UPF0262"/>
    <property type="match status" value="1"/>
</dbReference>
<dbReference type="InterPro" id="IPR008321">
    <property type="entry name" value="UCP032146"/>
</dbReference>
<dbReference type="NCBIfam" id="NF002769">
    <property type="entry name" value="PRK02853.1"/>
    <property type="match status" value="1"/>
</dbReference>
<dbReference type="Pfam" id="PF06793">
    <property type="entry name" value="UPF0262"/>
    <property type="match status" value="1"/>
</dbReference>
<dbReference type="PIRSF" id="PIRSF032146">
    <property type="entry name" value="UCP032146"/>
    <property type="match status" value="1"/>
</dbReference>
<accession>Q11LY1</accession>
<feature type="chain" id="PRO_0000314199" description="UPF0262 protein Meso_0189">
    <location>
        <begin position="1"/>
        <end position="161"/>
    </location>
</feature>
<protein>
    <recommendedName>
        <fullName evidence="1">UPF0262 protein Meso_0189</fullName>
    </recommendedName>
</protein>
<reference key="1">
    <citation type="submission" date="2006-06" db="EMBL/GenBank/DDBJ databases">
        <title>Complete sequence of chromosome of Mesorhizobium sp. BNC1.</title>
        <authorList>
            <consortium name="US DOE Joint Genome Institute"/>
            <person name="Copeland A."/>
            <person name="Lucas S."/>
            <person name="Lapidus A."/>
            <person name="Barry K."/>
            <person name="Detter J.C."/>
            <person name="Glavina del Rio T."/>
            <person name="Hammon N."/>
            <person name="Israni S."/>
            <person name="Dalin E."/>
            <person name="Tice H."/>
            <person name="Pitluck S."/>
            <person name="Chertkov O."/>
            <person name="Brettin T."/>
            <person name="Bruce D."/>
            <person name="Han C."/>
            <person name="Tapia R."/>
            <person name="Gilna P."/>
            <person name="Schmutz J."/>
            <person name="Larimer F."/>
            <person name="Land M."/>
            <person name="Hauser L."/>
            <person name="Kyrpides N."/>
            <person name="Mikhailova N."/>
            <person name="Richardson P."/>
        </authorList>
    </citation>
    <scope>NUCLEOTIDE SEQUENCE [LARGE SCALE GENOMIC DNA]</scope>
    <source>
        <strain>BNC1</strain>
    </source>
</reference>
<gene>
    <name type="ordered locus">Meso_0189</name>
</gene>
<sequence length="161" mass="18210">MGERSSAKARLIDVELDETVGRAPPDVEHERAVAIFDLVEENTFHPVGDQAGGPYRLKISLIDSRLALSVTREGGDPVVTHMLSLTPFRRIVKDYFLVCESYYQAIRSATPSQIEAIDMGRRGLHNEGSQTLMDRLNGKIEVDFNTARRLFTLICVLHWRR</sequence>
<name>Y189_CHESB</name>
<evidence type="ECO:0000255" key="1">
    <source>
        <dbReference type="HAMAP-Rule" id="MF_00678"/>
    </source>
</evidence>